<sequence>MARFYRRRKFCRFTAENVAYIDYKDIDTLKQYITENGKIVPSRITGTKARYQRQLALAIKQARYLSLIPYTDNHK</sequence>
<organism>
    <name type="scientific">Acinetobacter baumannii (strain ATCC 17978 / DSM 105126 / CIP 53.77 / LMG 1025 / NCDC KC755 / 5377)</name>
    <dbReference type="NCBI Taxonomy" id="400667"/>
    <lineage>
        <taxon>Bacteria</taxon>
        <taxon>Pseudomonadati</taxon>
        <taxon>Pseudomonadota</taxon>
        <taxon>Gammaproteobacteria</taxon>
        <taxon>Moraxellales</taxon>
        <taxon>Moraxellaceae</taxon>
        <taxon>Acinetobacter</taxon>
        <taxon>Acinetobacter calcoaceticus/baumannii complex</taxon>
    </lineage>
</organism>
<accession>A3M6Q5</accession>
<reference key="1">
    <citation type="journal article" date="2007" name="Genes Dev.">
        <title>New insights into Acinetobacter baumannii pathogenesis revealed by high-density pyrosequencing and transposon mutagenesis.</title>
        <authorList>
            <person name="Smith M.G."/>
            <person name="Gianoulis T.A."/>
            <person name="Pukatzki S."/>
            <person name="Mekalanos J.J."/>
            <person name="Ornston L.N."/>
            <person name="Gerstein M."/>
            <person name="Snyder M."/>
        </authorList>
    </citation>
    <scope>NUCLEOTIDE SEQUENCE [LARGE SCALE GENOMIC DNA]</scope>
    <source>
        <strain>ATCC 17978 / DSM 105126 / CIP 53.77 / LMG 1025 / NCDC KC755 / 5377</strain>
    </source>
</reference>
<name>RS18_ACIBT</name>
<feature type="chain" id="PRO_1000003433" description="Small ribosomal subunit protein bS18">
    <location>
        <begin position="1"/>
        <end position="75"/>
    </location>
</feature>
<protein>
    <recommendedName>
        <fullName evidence="1">Small ribosomal subunit protein bS18</fullName>
    </recommendedName>
    <alternativeName>
        <fullName evidence="2">30S ribosomal protein S18</fullName>
    </alternativeName>
</protein>
<gene>
    <name evidence="1" type="primary">rpsR</name>
    <name type="ordered locus">A1S_2172</name>
</gene>
<dbReference type="EMBL" id="CP000521">
    <property type="protein sequence ID" value="ABO12599.1"/>
    <property type="molecule type" value="Genomic_DNA"/>
</dbReference>
<dbReference type="RefSeq" id="WP_000090661.1">
    <property type="nucleotide sequence ID" value="NZ_CP053098.1"/>
</dbReference>
<dbReference type="SMR" id="A3M6Q5"/>
<dbReference type="GeneID" id="92894414"/>
<dbReference type="KEGG" id="acb:A1S_2172"/>
<dbReference type="HOGENOM" id="CLU_148710_2_3_6"/>
<dbReference type="GO" id="GO:0022627">
    <property type="term" value="C:cytosolic small ribosomal subunit"/>
    <property type="evidence" value="ECO:0007669"/>
    <property type="project" value="TreeGrafter"/>
</dbReference>
<dbReference type="GO" id="GO:0070181">
    <property type="term" value="F:small ribosomal subunit rRNA binding"/>
    <property type="evidence" value="ECO:0007669"/>
    <property type="project" value="TreeGrafter"/>
</dbReference>
<dbReference type="GO" id="GO:0003735">
    <property type="term" value="F:structural constituent of ribosome"/>
    <property type="evidence" value="ECO:0007669"/>
    <property type="project" value="InterPro"/>
</dbReference>
<dbReference type="GO" id="GO:0006412">
    <property type="term" value="P:translation"/>
    <property type="evidence" value="ECO:0007669"/>
    <property type="project" value="UniProtKB-UniRule"/>
</dbReference>
<dbReference type="FunFam" id="4.10.640.10:FF:000001">
    <property type="entry name" value="30S ribosomal protein S18"/>
    <property type="match status" value="1"/>
</dbReference>
<dbReference type="Gene3D" id="4.10.640.10">
    <property type="entry name" value="Ribosomal protein S18"/>
    <property type="match status" value="1"/>
</dbReference>
<dbReference type="HAMAP" id="MF_00270">
    <property type="entry name" value="Ribosomal_bS18"/>
    <property type="match status" value="1"/>
</dbReference>
<dbReference type="InterPro" id="IPR001648">
    <property type="entry name" value="Ribosomal_bS18"/>
</dbReference>
<dbReference type="InterPro" id="IPR018275">
    <property type="entry name" value="Ribosomal_bS18_CS"/>
</dbReference>
<dbReference type="InterPro" id="IPR036870">
    <property type="entry name" value="Ribosomal_bS18_sf"/>
</dbReference>
<dbReference type="NCBIfam" id="TIGR00165">
    <property type="entry name" value="S18"/>
    <property type="match status" value="1"/>
</dbReference>
<dbReference type="PANTHER" id="PTHR13479">
    <property type="entry name" value="30S RIBOSOMAL PROTEIN S18"/>
    <property type="match status" value="1"/>
</dbReference>
<dbReference type="PANTHER" id="PTHR13479:SF40">
    <property type="entry name" value="SMALL RIBOSOMAL SUBUNIT PROTEIN BS18M"/>
    <property type="match status" value="1"/>
</dbReference>
<dbReference type="Pfam" id="PF01084">
    <property type="entry name" value="Ribosomal_S18"/>
    <property type="match status" value="1"/>
</dbReference>
<dbReference type="PRINTS" id="PR00974">
    <property type="entry name" value="RIBOSOMALS18"/>
</dbReference>
<dbReference type="SUPFAM" id="SSF46911">
    <property type="entry name" value="Ribosomal protein S18"/>
    <property type="match status" value="1"/>
</dbReference>
<dbReference type="PROSITE" id="PS00057">
    <property type="entry name" value="RIBOSOMAL_S18"/>
    <property type="match status" value="1"/>
</dbReference>
<evidence type="ECO:0000255" key="1">
    <source>
        <dbReference type="HAMAP-Rule" id="MF_00270"/>
    </source>
</evidence>
<evidence type="ECO:0000305" key="2"/>
<comment type="function">
    <text evidence="1">Binds as a heterodimer with protein bS6 to the central domain of the 16S rRNA, where it helps stabilize the platform of the 30S subunit.</text>
</comment>
<comment type="subunit">
    <text evidence="1">Part of the 30S ribosomal subunit. Forms a tight heterodimer with protein bS6.</text>
</comment>
<comment type="similarity">
    <text evidence="1">Belongs to the bacterial ribosomal protein bS18 family.</text>
</comment>
<keyword id="KW-0687">Ribonucleoprotein</keyword>
<keyword id="KW-0689">Ribosomal protein</keyword>
<keyword id="KW-0694">RNA-binding</keyword>
<keyword id="KW-0699">rRNA-binding</keyword>
<proteinExistence type="inferred from homology"/>